<proteinExistence type="inferred from homology"/>
<evidence type="ECO:0000255" key="1">
    <source>
        <dbReference type="HAMAP-Rule" id="MF_00318"/>
    </source>
</evidence>
<name>ENO2_LACJO</name>
<gene>
    <name evidence="1" type="primary">eno2</name>
    <name type="ordered locus">LJ_1246</name>
</gene>
<reference key="1">
    <citation type="journal article" date="2004" name="Proc. Natl. Acad. Sci. U.S.A.">
        <title>The genome sequence of the probiotic intestinal bacterium Lactobacillus johnsonii NCC 533.</title>
        <authorList>
            <person name="Pridmore R.D."/>
            <person name="Berger B."/>
            <person name="Desiere F."/>
            <person name="Vilanova D."/>
            <person name="Barretto C."/>
            <person name="Pittet A.-C."/>
            <person name="Zwahlen M.-C."/>
            <person name="Rouvet M."/>
            <person name="Altermann E."/>
            <person name="Barrangou R."/>
            <person name="Mollet B."/>
            <person name="Mercenier A."/>
            <person name="Klaenhammer T."/>
            <person name="Arigoni F."/>
            <person name="Schell M.A."/>
        </authorList>
    </citation>
    <scope>NUCLEOTIDE SEQUENCE [LARGE SCALE GENOMIC DNA]</scope>
    <source>
        <strain>CNCM I-1225 / La1 / NCC 533</strain>
    </source>
</reference>
<organism>
    <name type="scientific">Lactobacillus johnsonii (strain CNCM I-12250 / La1 / NCC 533)</name>
    <dbReference type="NCBI Taxonomy" id="257314"/>
    <lineage>
        <taxon>Bacteria</taxon>
        <taxon>Bacillati</taxon>
        <taxon>Bacillota</taxon>
        <taxon>Bacilli</taxon>
        <taxon>Lactobacillales</taxon>
        <taxon>Lactobacillaceae</taxon>
        <taxon>Lactobacillus</taxon>
    </lineage>
</organism>
<keyword id="KW-0963">Cytoplasm</keyword>
<keyword id="KW-0324">Glycolysis</keyword>
<keyword id="KW-0456">Lyase</keyword>
<keyword id="KW-0460">Magnesium</keyword>
<keyword id="KW-0479">Metal-binding</keyword>
<keyword id="KW-0964">Secreted</keyword>
<protein>
    <recommendedName>
        <fullName evidence="1">Enolase 2</fullName>
        <ecNumber evidence="1">4.2.1.11</ecNumber>
    </recommendedName>
    <alternativeName>
        <fullName evidence="1">2-phospho-D-glycerate hydro-lyase 2</fullName>
    </alternativeName>
    <alternativeName>
        <fullName evidence="1">2-phosphoglycerate dehydratase 2</fullName>
    </alternativeName>
</protein>
<feature type="chain" id="PRO_0000133902" description="Enolase 2">
    <location>
        <begin position="1"/>
        <end position="428"/>
    </location>
</feature>
<feature type="active site" description="Proton donor" evidence="1">
    <location>
        <position position="204"/>
    </location>
</feature>
<feature type="active site" description="Proton acceptor" evidence="1">
    <location>
        <position position="337"/>
    </location>
</feature>
<feature type="binding site" evidence="1">
    <location>
        <position position="162"/>
    </location>
    <ligand>
        <name>(2R)-2-phosphoglycerate</name>
        <dbReference type="ChEBI" id="CHEBI:58289"/>
    </ligand>
</feature>
<feature type="binding site" evidence="1">
    <location>
        <position position="241"/>
    </location>
    <ligand>
        <name>Mg(2+)</name>
        <dbReference type="ChEBI" id="CHEBI:18420"/>
    </ligand>
</feature>
<feature type="binding site" evidence="1">
    <location>
        <position position="285"/>
    </location>
    <ligand>
        <name>Mg(2+)</name>
        <dbReference type="ChEBI" id="CHEBI:18420"/>
    </ligand>
</feature>
<feature type="binding site" evidence="1">
    <location>
        <position position="312"/>
    </location>
    <ligand>
        <name>Mg(2+)</name>
        <dbReference type="ChEBI" id="CHEBI:18420"/>
    </ligand>
</feature>
<feature type="binding site" evidence="1">
    <location>
        <position position="337"/>
    </location>
    <ligand>
        <name>(2R)-2-phosphoglycerate</name>
        <dbReference type="ChEBI" id="CHEBI:58289"/>
    </ligand>
</feature>
<feature type="binding site" evidence="1">
    <location>
        <position position="366"/>
    </location>
    <ligand>
        <name>(2R)-2-phosphoglycerate</name>
        <dbReference type="ChEBI" id="CHEBI:58289"/>
    </ligand>
</feature>
<feature type="binding site" evidence="1">
    <location>
        <position position="367"/>
    </location>
    <ligand>
        <name>(2R)-2-phosphoglycerate</name>
        <dbReference type="ChEBI" id="CHEBI:58289"/>
    </ligand>
</feature>
<feature type="binding site" evidence="1">
    <location>
        <position position="388"/>
    </location>
    <ligand>
        <name>(2R)-2-phosphoglycerate</name>
        <dbReference type="ChEBI" id="CHEBI:58289"/>
    </ligand>
</feature>
<accession>Q74J64</accession>
<sequence length="428" mass="47269">MTVYVEKVRALEIFDSRGNPTVEVHAYLSDGTVAKAEVPSGASTGEKEAVELRDGGNRLQGKGVTQAVTNVNGPINDALKGLSPYNQAEIDRTMIKLDGTLNKAKLGANAILGTSMAIARAAARSKDEPLYRYLGGCELEMPQTFHNVINGGKHADNGIDIQEFMITPVAKNSFRDGFEKIVNTYHALKAVIEEAGFETGLGDEGGFAPNLNSSEEALKMLRKAIIKAGYKPRKDIAIAFDAAASSFYNTEDGKYHFEGHIWNGEEMLQYYDKLLKEFPEIISCEDPFDENDWENFEKFTAKFGSTHQVVADDNVCTNPKLVRKAIKDKLCNSILIKLNQIGTITETLETIRLARKNNMTTMVSHRSGETGDTFIADFTVATNAGQLKSGAPARSERVEKYNRLLEIENQIGVENERLNHFPNNVDFD</sequence>
<comment type="function">
    <text evidence="1">Catalyzes the reversible conversion of 2-phosphoglycerate (2-PG) into phosphoenolpyruvate (PEP). It is essential for the degradation of carbohydrates via glycolysis.</text>
</comment>
<comment type="catalytic activity">
    <reaction evidence="1">
        <text>(2R)-2-phosphoglycerate = phosphoenolpyruvate + H2O</text>
        <dbReference type="Rhea" id="RHEA:10164"/>
        <dbReference type="ChEBI" id="CHEBI:15377"/>
        <dbReference type="ChEBI" id="CHEBI:58289"/>
        <dbReference type="ChEBI" id="CHEBI:58702"/>
        <dbReference type="EC" id="4.2.1.11"/>
    </reaction>
</comment>
<comment type="cofactor">
    <cofactor evidence="1">
        <name>Mg(2+)</name>
        <dbReference type="ChEBI" id="CHEBI:18420"/>
    </cofactor>
    <text evidence="1">Binds a second Mg(2+) ion via substrate during catalysis.</text>
</comment>
<comment type="pathway">
    <text evidence="1">Carbohydrate degradation; glycolysis; pyruvate from D-glyceraldehyde 3-phosphate: step 4/5.</text>
</comment>
<comment type="subcellular location">
    <subcellularLocation>
        <location evidence="1">Cytoplasm</location>
    </subcellularLocation>
    <subcellularLocation>
        <location evidence="1">Secreted</location>
    </subcellularLocation>
    <subcellularLocation>
        <location evidence="1">Cell surface</location>
    </subcellularLocation>
    <text evidence="1">Fractions of enolase are present in both the cytoplasm and on the cell surface.</text>
</comment>
<comment type="similarity">
    <text evidence="1">Belongs to the enolase family.</text>
</comment>
<dbReference type="EC" id="4.2.1.11" evidence="1"/>
<dbReference type="EMBL" id="AE017198">
    <property type="protein sequence ID" value="AAS09067.1"/>
    <property type="molecule type" value="Genomic_DNA"/>
</dbReference>
<dbReference type="RefSeq" id="WP_011162075.1">
    <property type="nucleotide sequence ID" value="NC_005362.1"/>
</dbReference>
<dbReference type="SMR" id="Q74J64"/>
<dbReference type="KEGG" id="ljo:LJ_1246"/>
<dbReference type="PATRIC" id="fig|257314.6.peg.1112"/>
<dbReference type="eggNOG" id="COG0148">
    <property type="taxonomic scope" value="Bacteria"/>
</dbReference>
<dbReference type="HOGENOM" id="CLU_031223_2_1_9"/>
<dbReference type="UniPathway" id="UPA00109">
    <property type="reaction ID" value="UER00187"/>
</dbReference>
<dbReference type="Proteomes" id="UP000000581">
    <property type="component" value="Chromosome"/>
</dbReference>
<dbReference type="GO" id="GO:0009986">
    <property type="term" value="C:cell surface"/>
    <property type="evidence" value="ECO:0007669"/>
    <property type="project" value="UniProtKB-SubCell"/>
</dbReference>
<dbReference type="GO" id="GO:0005576">
    <property type="term" value="C:extracellular region"/>
    <property type="evidence" value="ECO:0007669"/>
    <property type="project" value="UniProtKB-SubCell"/>
</dbReference>
<dbReference type="GO" id="GO:0000015">
    <property type="term" value="C:phosphopyruvate hydratase complex"/>
    <property type="evidence" value="ECO:0007669"/>
    <property type="project" value="InterPro"/>
</dbReference>
<dbReference type="GO" id="GO:0043236">
    <property type="term" value="F:laminin binding"/>
    <property type="evidence" value="ECO:0000314"/>
    <property type="project" value="CAFA"/>
</dbReference>
<dbReference type="GO" id="GO:0000287">
    <property type="term" value="F:magnesium ion binding"/>
    <property type="evidence" value="ECO:0007669"/>
    <property type="project" value="UniProtKB-UniRule"/>
</dbReference>
<dbReference type="GO" id="GO:0004634">
    <property type="term" value="F:phosphopyruvate hydratase activity"/>
    <property type="evidence" value="ECO:0007669"/>
    <property type="project" value="UniProtKB-UniRule"/>
</dbReference>
<dbReference type="GO" id="GO:0006096">
    <property type="term" value="P:glycolytic process"/>
    <property type="evidence" value="ECO:0007669"/>
    <property type="project" value="UniProtKB-UniRule"/>
</dbReference>
<dbReference type="CDD" id="cd03313">
    <property type="entry name" value="enolase"/>
    <property type="match status" value="1"/>
</dbReference>
<dbReference type="FunFam" id="3.20.20.120:FF:000014">
    <property type="entry name" value="Enolase"/>
    <property type="match status" value="1"/>
</dbReference>
<dbReference type="Gene3D" id="3.20.20.120">
    <property type="entry name" value="Enolase-like C-terminal domain"/>
    <property type="match status" value="1"/>
</dbReference>
<dbReference type="Gene3D" id="3.30.390.10">
    <property type="entry name" value="Enolase-like, N-terminal domain"/>
    <property type="match status" value="1"/>
</dbReference>
<dbReference type="HAMAP" id="MF_00318">
    <property type="entry name" value="Enolase"/>
    <property type="match status" value="1"/>
</dbReference>
<dbReference type="InterPro" id="IPR000941">
    <property type="entry name" value="Enolase"/>
</dbReference>
<dbReference type="InterPro" id="IPR036849">
    <property type="entry name" value="Enolase-like_C_sf"/>
</dbReference>
<dbReference type="InterPro" id="IPR029017">
    <property type="entry name" value="Enolase-like_N"/>
</dbReference>
<dbReference type="InterPro" id="IPR020810">
    <property type="entry name" value="Enolase_C"/>
</dbReference>
<dbReference type="InterPro" id="IPR020809">
    <property type="entry name" value="Enolase_CS"/>
</dbReference>
<dbReference type="InterPro" id="IPR020811">
    <property type="entry name" value="Enolase_N"/>
</dbReference>
<dbReference type="NCBIfam" id="TIGR01060">
    <property type="entry name" value="eno"/>
    <property type="match status" value="1"/>
</dbReference>
<dbReference type="PANTHER" id="PTHR11902">
    <property type="entry name" value="ENOLASE"/>
    <property type="match status" value="1"/>
</dbReference>
<dbReference type="PANTHER" id="PTHR11902:SF1">
    <property type="entry name" value="ENOLASE"/>
    <property type="match status" value="1"/>
</dbReference>
<dbReference type="Pfam" id="PF00113">
    <property type="entry name" value="Enolase_C"/>
    <property type="match status" value="1"/>
</dbReference>
<dbReference type="Pfam" id="PF03952">
    <property type="entry name" value="Enolase_N"/>
    <property type="match status" value="1"/>
</dbReference>
<dbReference type="PIRSF" id="PIRSF001400">
    <property type="entry name" value="Enolase"/>
    <property type="match status" value="1"/>
</dbReference>
<dbReference type="PRINTS" id="PR00148">
    <property type="entry name" value="ENOLASE"/>
</dbReference>
<dbReference type="SFLD" id="SFLDS00001">
    <property type="entry name" value="Enolase"/>
    <property type="match status" value="1"/>
</dbReference>
<dbReference type="SFLD" id="SFLDF00002">
    <property type="entry name" value="enolase"/>
    <property type="match status" value="1"/>
</dbReference>
<dbReference type="SMART" id="SM01192">
    <property type="entry name" value="Enolase_C"/>
    <property type="match status" value="1"/>
</dbReference>
<dbReference type="SMART" id="SM01193">
    <property type="entry name" value="Enolase_N"/>
    <property type="match status" value="1"/>
</dbReference>
<dbReference type="SUPFAM" id="SSF51604">
    <property type="entry name" value="Enolase C-terminal domain-like"/>
    <property type="match status" value="1"/>
</dbReference>
<dbReference type="SUPFAM" id="SSF54826">
    <property type="entry name" value="Enolase N-terminal domain-like"/>
    <property type="match status" value="1"/>
</dbReference>
<dbReference type="PROSITE" id="PS00164">
    <property type="entry name" value="ENOLASE"/>
    <property type="match status" value="1"/>
</dbReference>